<reference key="1">
    <citation type="journal article" date="2006" name="Nat. Biotechnol.">
        <title>Complete genome of the mutualistic, N2-fixing grass endophyte Azoarcus sp. strain BH72.</title>
        <authorList>
            <person name="Krause A."/>
            <person name="Ramakumar A."/>
            <person name="Bartels D."/>
            <person name="Battistoni F."/>
            <person name="Bekel T."/>
            <person name="Boch J."/>
            <person name="Boehm M."/>
            <person name="Friedrich F."/>
            <person name="Hurek T."/>
            <person name="Krause L."/>
            <person name="Linke B."/>
            <person name="McHardy A.C."/>
            <person name="Sarkar A."/>
            <person name="Schneiker S."/>
            <person name="Syed A.A."/>
            <person name="Thauer R."/>
            <person name="Vorhoelter F.-J."/>
            <person name="Weidner S."/>
            <person name="Puehler A."/>
            <person name="Reinhold-Hurek B."/>
            <person name="Kaiser O."/>
            <person name="Goesmann A."/>
        </authorList>
    </citation>
    <scope>NUCLEOTIDE SEQUENCE [LARGE SCALE GENOMIC DNA]</scope>
    <source>
        <strain>BH72</strain>
    </source>
</reference>
<name>RL4_AZOSB</name>
<keyword id="KW-1185">Reference proteome</keyword>
<keyword id="KW-0687">Ribonucleoprotein</keyword>
<keyword id="KW-0689">Ribosomal protein</keyword>
<keyword id="KW-0694">RNA-binding</keyword>
<keyword id="KW-0699">rRNA-binding</keyword>
<organism>
    <name type="scientific">Azoarcus sp. (strain BH72)</name>
    <dbReference type="NCBI Taxonomy" id="418699"/>
    <lineage>
        <taxon>Bacteria</taxon>
        <taxon>Pseudomonadati</taxon>
        <taxon>Pseudomonadota</taxon>
        <taxon>Betaproteobacteria</taxon>
        <taxon>Rhodocyclales</taxon>
        <taxon>Zoogloeaceae</taxon>
        <taxon>Azoarcus</taxon>
    </lineage>
</organism>
<evidence type="ECO:0000255" key="1">
    <source>
        <dbReference type="HAMAP-Rule" id="MF_01328"/>
    </source>
</evidence>
<evidence type="ECO:0000256" key="2">
    <source>
        <dbReference type="SAM" id="MobiDB-lite"/>
    </source>
</evidence>
<evidence type="ECO:0000305" key="3"/>
<sequence length="206" mass="22673">MELKLLNEQGQPASTLDASDVLFAREYNEALVHQVVTAYLANARSGNRAQKGRSEIAKSTRKPFRQKGTGNARAGMASSPLWRGGGKIFPNSPDENFSQKVNRKMYRAGVAAILSQLAREDRLAVVDNFSVEAPKTRLLAEKLKGMGLDSVLVITDGLDENLFLSSRNLHKVLVLDVHETDPVSLVRFPKVLVTKGALAKMEEAWQ</sequence>
<accession>A1KB26</accession>
<proteinExistence type="inferred from homology"/>
<gene>
    <name evidence="1" type="primary">rplD</name>
    <name type="ordered locus">azo3416</name>
</gene>
<comment type="function">
    <text evidence="1">One of the primary rRNA binding proteins, this protein initially binds near the 5'-end of the 23S rRNA. It is important during the early stages of 50S assembly. It makes multiple contacts with different domains of the 23S rRNA in the assembled 50S subunit and ribosome.</text>
</comment>
<comment type="function">
    <text evidence="1">Forms part of the polypeptide exit tunnel.</text>
</comment>
<comment type="subunit">
    <text evidence="1">Part of the 50S ribosomal subunit.</text>
</comment>
<comment type="similarity">
    <text evidence="1">Belongs to the universal ribosomal protein uL4 family.</text>
</comment>
<protein>
    <recommendedName>
        <fullName evidence="1">Large ribosomal subunit protein uL4</fullName>
    </recommendedName>
    <alternativeName>
        <fullName evidence="3">50S ribosomal protein L4</fullName>
    </alternativeName>
</protein>
<dbReference type="EMBL" id="AM406670">
    <property type="protein sequence ID" value="CAL96032.1"/>
    <property type="molecule type" value="Genomic_DNA"/>
</dbReference>
<dbReference type="RefSeq" id="WP_011767139.1">
    <property type="nucleotide sequence ID" value="NC_008702.1"/>
</dbReference>
<dbReference type="SMR" id="A1KB26"/>
<dbReference type="STRING" id="62928.azo3416"/>
<dbReference type="KEGG" id="aoa:dqs_3555"/>
<dbReference type="KEGG" id="azo:azo3416"/>
<dbReference type="eggNOG" id="COG0088">
    <property type="taxonomic scope" value="Bacteria"/>
</dbReference>
<dbReference type="HOGENOM" id="CLU_041575_5_2_4"/>
<dbReference type="OrthoDB" id="9803201at2"/>
<dbReference type="Proteomes" id="UP000002588">
    <property type="component" value="Chromosome"/>
</dbReference>
<dbReference type="GO" id="GO:1990904">
    <property type="term" value="C:ribonucleoprotein complex"/>
    <property type="evidence" value="ECO:0007669"/>
    <property type="project" value="UniProtKB-KW"/>
</dbReference>
<dbReference type="GO" id="GO:0005840">
    <property type="term" value="C:ribosome"/>
    <property type="evidence" value="ECO:0007669"/>
    <property type="project" value="UniProtKB-KW"/>
</dbReference>
<dbReference type="GO" id="GO:0019843">
    <property type="term" value="F:rRNA binding"/>
    <property type="evidence" value="ECO:0007669"/>
    <property type="project" value="UniProtKB-UniRule"/>
</dbReference>
<dbReference type="GO" id="GO:0003735">
    <property type="term" value="F:structural constituent of ribosome"/>
    <property type="evidence" value="ECO:0007669"/>
    <property type="project" value="InterPro"/>
</dbReference>
<dbReference type="GO" id="GO:0006412">
    <property type="term" value="P:translation"/>
    <property type="evidence" value="ECO:0007669"/>
    <property type="project" value="UniProtKB-UniRule"/>
</dbReference>
<dbReference type="Gene3D" id="3.40.1370.10">
    <property type="match status" value="1"/>
</dbReference>
<dbReference type="HAMAP" id="MF_01328_B">
    <property type="entry name" value="Ribosomal_uL4_B"/>
    <property type="match status" value="1"/>
</dbReference>
<dbReference type="InterPro" id="IPR002136">
    <property type="entry name" value="Ribosomal_uL4"/>
</dbReference>
<dbReference type="InterPro" id="IPR013005">
    <property type="entry name" value="Ribosomal_uL4-like"/>
</dbReference>
<dbReference type="InterPro" id="IPR023574">
    <property type="entry name" value="Ribosomal_uL4_dom_sf"/>
</dbReference>
<dbReference type="NCBIfam" id="TIGR03953">
    <property type="entry name" value="rplD_bact"/>
    <property type="match status" value="1"/>
</dbReference>
<dbReference type="PANTHER" id="PTHR10746">
    <property type="entry name" value="50S RIBOSOMAL PROTEIN L4"/>
    <property type="match status" value="1"/>
</dbReference>
<dbReference type="PANTHER" id="PTHR10746:SF6">
    <property type="entry name" value="LARGE RIBOSOMAL SUBUNIT PROTEIN UL4M"/>
    <property type="match status" value="1"/>
</dbReference>
<dbReference type="Pfam" id="PF00573">
    <property type="entry name" value="Ribosomal_L4"/>
    <property type="match status" value="1"/>
</dbReference>
<dbReference type="SUPFAM" id="SSF52166">
    <property type="entry name" value="Ribosomal protein L4"/>
    <property type="match status" value="1"/>
</dbReference>
<feature type="chain" id="PRO_1000052353" description="Large ribosomal subunit protein uL4">
    <location>
        <begin position="1"/>
        <end position="206"/>
    </location>
</feature>
<feature type="region of interest" description="Disordered" evidence="2">
    <location>
        <begin position="47"/>
        <end position="94"/>
    </location>
</feature>